<dbReference type="EMBL" id="BC062381">
    <property type="protein sequence ID" value="AAH62381.1"/>
    <property type="molecule type" value="mRNA"/>
</dbReference>
<dbReference type="EMBL" id="AF157110">
    <property type="protein sequence ID" value="AAD40680.1"/>
    <property type="molecule type" value="mRNA"/>
</dbReference>
<dbReference type="SMR" id="Q6P698"/>
<dbReference type="FunCoup" id="Q6P698">
    <property type="interactions" value="2373"/>
</dbReference>
<dbReference type="STRING" id="7955.ENSDARP00000142380"/>
<dbReference type="PaxDb" id="7955-ENSDARP00000108316"/>
<dbReference type="AGR" id="ZFIN:ZDB-GENE-991213-5"/>
<dbReference type="ZFIN" id="ZDB-GENE-991213-5">
    <property type="gene designation" value="lcp1"/>
</dbReference>
<dbReference type="eggNOG" id="KOG0046">
    <property type="taxonomic scope" value="Eukaryota"/>
</dbReference>
<dbReference type="InParanoid" id="Q6P698"/>
<dbReference type="PhylomeDB" id="Q6P698"/>
<dbReference type="PRO" id="PR:Q6P698"/>
<dbReference type="Proteomes" id="UP000000437">
    <property type="component" value="Unplaced"/>
</dbReference>
<dbReference type="GO" id="GO:0005884">
    <property type="term" value="C:actin filament"/>
    <property type="evidence" value="ECO:0000318"/>
    <property type="project" value="GO_Central"/>
</dbReference>
<dbReference type="GO" id="GO:0032432">
    <property type="term" value="C:actin filament bundle"/>
    <property type="evidence" value="ECO:0000318"/>
    <property type="project" value="GO_Central"/>
</dbReference>
<dbReference type="GO" id="GO:0070161">
    <property type="term" value="C:anchoring junction"/>
    <property type="evidence" value="ECO:0007669"/>
    <property type="project" value="UniProtKB-SubCell"/>
</dbReference>
<dbReference type="GO" id="GO:0005737">
    <property type="term" value="C:cytoplasm"/>
    <property type="evidence" value="ECO:0000314"/>
    <property type="project" value="ZFIN"/>
</dbReference>
<dbReference type="GO" id="GO:0032587">
    <property type="term" value="C:ruffle membrane"/>
    <property type="evidence" value="ECO:0007669"/>
    <property type="project" value="UniProtKB-SubCell"/>
</dbReference>
<dbReference type="GO" id="GO:0051015">
    <property type="term" value="F:actin filament binding"/>
    <property type="evidence" value="ECO:0000318"/>
    <property type="project" value="GO_Central"/>
</dbReference>
<dbReference type="GO" id="GO:0005509">
    <property type="term" value="F:calcium ion binding"/>
    <property type="evidence" value="ECO:0007669"/>
    <property type="project" value="InterPro"/>
</dbReference>
<dbReference type="GO" id="GO:0051017">
    <property type="term" value="P:actin filament bundle assembly"/>
    <property type="evidence" value="ECO:0000318"/>
    <property type="project" value="GO_Central"/>
</dbReference>
<dbReference type="GO" id="GO:0051639">
    <property type="term" value="P:actin filament network formation"/>
    <property type="evidence" value="ECO:0000318"/>
    <property type="project" value="GO_Central"/>
</dbReference>
<dbReference type="CDD" id="cd21327">
    <property type="entry name" value="CH_PLS2_rpt2"/>
    <property type="match status" value="1"/>
</dbReference>
<dbReference type="CDD" id="cd21333">
    <property type="entry name" value="CH_PLS2_rpt4"/>
    <property type="match status" value="1"/>
</dbReference>
<dbReference type="CDD" id="cd21292">
    <property type="entry name" value="CH_PLS_rpt1"/>
    <property type="match status" value="1"/>
</dbReference>
<dbReference type="CDD" id="cd00051">
    <property type="entry name" value="EFh"/>
    <property type="match status" value="1"/>
</dbReference>
<dbReference type="FunFam" id="1.10.238.10:FF:000263">
    <property type="entry name" value="plastin-1 isoform X2"/>
    <property type="match status" value="1"/>
</dbReference>
<dbReference type="FunFam" id="1.10.418.10:FF:000010">
    <property type="entry name" value="Plastin-3 isoform 1"/>
    <property type="match status" value="1"/>
</dbReference>
<dbReference type="FunFam" id="1.10.418.10:FF:000012">
    <property type="entry name" value="Plastin-3 isoform 1"/>
    <property type="match status" value="1"/>
</dbReference>
<dbReference type="FunFam" id="1.10.418.10:FF:000014">
    <property type="entry name" value="Plastin-3 isoform 1"/>
    <property type="match status" value="1"/>
</dbReference>
<dbReference type="FunFam" id="1.10.418.10:FF:000025">
    <property type="entry name" value="Plastin-3 isoform 1"/>
    <property type="match status" value="1"/>
</dbReference>
<dbReference type="Gene3D" id="1.10.418.10">
    <property type="entry name" value="Calponin-like domain"/>
    <property type="match status" value="4"/>
</dbReference>
<dbReference type="Gene3D" id="1.10.238.10">
    <property type="entry name" value="EF-hand"/>
    <property type="match status" value="1"/>
</dbReference>
<dbReference type="InterPro" id="IPR001589">
    <property type="entry name" value="Actinin_actin-bd_CS"/>
</dbReference>
<dbReference type="InterPro" id="IPR001715">
    <property type="entry name" value="CH_dom"/>
</dbReference>
<dbReference type="InterPro" id="IPR036872">
    <property type="entry name" value="CH_dom_sf"/>
</dbReference>
<dbReference type="InterPro" id="IPR011992">
    <property type="entry name" value="EF-hand-dom_pair"/>
</dbReference>
<dbReference type="InterPro" id="IPR018247">
    <property type="entry name" value="EF_Hand_1_Ca_BS"/>
</dbReference>
<dbReference type="InterPro" id="IPR002048">
    <property type="entry name" value="EF_hand_dom"/>
</dbReference>
<dbReference type="InterPro" id="IPR039959">
    <property type="entry name" value="Fimbrin/Plastin"/>
</dbReference>
<dbReference type="PANTHER" id="PTHR19961">
    <property type="entry name" value="FIMBRIN/PLASTIN"/>
    <property type="match status" value="1"/>
</dbReference>
<dbReference type="PANTHER" id="PTHR19961:SF35">
    <property type="entry name" value="PLASTIN-2"/>
    <property type="match status" value="1"/>
</dbReference>
<dbReference type="Pfam" id="PF00307">
    <property type="entry name" value="CH"/>
    <property type="match status" value="4"/>
</dbReference>
<dbReference type="Pfam" id="PF13499">
    <property type="entry name" value="EF-hand_7"/>
    <property type="match status" value="1"/>
</dbReference>
<dbReference type="SMART" id="SM00033">
    <property type="entry name" value="CH"/>
    <property type="match status" value="4"/>
</dbReference>
<dbReference type="SMART" id="SM00054">
    <property type="entry name" value="EFh"/>
    <property type="match status" value="2"/>
</dbReference>
<dbReference type="SUPFAM" id="SSF47576">
    <property type="entry name" value="Calponin-homology domain, CH-domain"/>
    <property type="match status" value="1"/>
</dbReference>
<dbReference type="SUPFAM" id="SSF47473">
    <property type="entry name" value="EF-hand"/>
    <property type="match status" value="1"/>
</dbReference>
<dbReference type="PROSITE" id="PS00019">
    <property type="entry name" value="ACTININ_1"/>
    <property type="match status" value="2"/>
</dbReference>
<dbReference type="PROSITE" id="PS00020">
    <property type="entry name" value="ACTININ_2"/>
    <property type="match status" value="2"/>
</dbReference>
<dbReference type="PROSITE" id="PS50021">
    <property type="entry name" value="CH"/>
    <property type="match status" value="4"/>
</dbReference>
<dbReference type="PROSITE" id="PS00018">
    <property type="entry name" value="EF_HAND_1"/>
    <property type="match status" value="2"/>
</dbReference>
<dbReference type="PROSITE" id="PS50222">
    <property type="entry name" value="EF_HAND_2"/>
    <property type="match status" value="2"/>
</dbReference>
<accession>Q6P698</accession>
<accession>Q9W746</accession>
<proteinExistence type="evidence at protein level"/>
<protein>
    <recommendedName>
        <fullName>Plastin-2</fullName>
    </recommendedName>
    <alternativeName>
        <fullName>L-plastin</fullName>
    </alternativeName>
    <alternativeName>
        <fullName>Lymphocyte cytosolic plastin 1</fullName>
    </alternativeName>
</protein>
<keyword id="KW-0009">Actin-binding</keyword>
<keyword id="KW-0106">Calcium</keyword>
<keyword id="KW-0965">Cell junction</keyword>
<keyword id="KW-1003">Cell membrane</keyword>
<keyword id="KW-0966">Cell projection</keyword>
<keyword id="KW-0963">Cytoplasm</keyword>
<keyword id="KW-0206">Cytoskeleton</keyword>
<keyword id="KW-0472">Membrane</keyword>
<keyword id="KW-0479">Metal-binding</keyword>
<keyword id="KW-1185">Reference proteome</keyword>
<keyword id="KW-0677">Repeat</keyword>
<comment type="function">
    <text evidence="1">Actin-binding protein. Plays a role in the activation of T-cells (By similarity).</text>
</comment>
<comment type="subunit">
    <text evidence="2">Monomer.</text>
</comment>
<comment type="subcellular location">
    <subcellularLocation>
        <location evidence="2">Cytoplasm</location>
        <location evidence="2">Cytoskeleton</location>
    </subcellularLocation>
    <subcellularLocation>
        <location evidence="2">Cell junction</location>
    </subcellularLocation>
    <subcellularLocation>
        <location evidence="2">Cell projection</location>
    </subcellularLocation>
    <subcellularLocation>
        <location evidence="2 3">Cell projection</location>
        <location evidence="2 3">Ruffle membrane</location>
        <topology evidence="3">Peripheral membrane protein</topology>
        <orientation evidence="3">Cytoplasmic side</orientation>
    </subcellularLocation>
</comment>
<comment type="tissue specificity">
    <text evidence="8">Expressed by macrophages (at protein level).</text>
</comment>
<comment type="developmental stage">
    <text evidence="7">Expressed in macrophage precursors as they migrate from the midline to the yolksac during somatogenesis. Prior to blood circulation, continues to be expressed in maturing macrophage precursors in the yolksac and in those that have migrated to the mesenchyme of the head. At 28 hours post-fertilization (hpf), also expressed in the caudal part of the axial vein and the surrounding mesenchyme.</text>
</comment>
<feature type="chain" id="PRO_0000073745" description="Plastin-2">
    <location>
        <begin position="1"/>
        <end position="624"/>
    </location>
</feature>
<feature type="domain" description="EF-hand 1" evidence="6">
    <location>
        <begin position="9"/>
        <end position="44"/>
    </location>
</feature>
<feature type="domain" description="EF-hand 2" evidence="6">
    <location>
        <begin position="49"/>
        <end position="84"/>
    </location>
</feature>
<feature type="domain" description="Calponin-homology (CH) 1" evidence="5">
    <location>
        <begin position="118"/>
        <end position="234"/>
    </location>
</feature>
<feature type="domain" description="Calponin-homology (CH) 2" evidence="5">
    <location>
        <begin position="262"/>
        <end position="373"/>
    </location>
</feature>
<feature type="domain" description="Calponin-homology (CH) 3" evidence="5">
    <location>
        <begin position="392"/>
        <end position="501"/>
    </location>
</feature>
<feature type="domain" description="Calponin-homology (CH) 4" evidence="5">
    <location>
        <begin position="513"/>
        <end position="621"/>
    </location>
</feature>
<feature type="region of interest" description="Actin-binding 1" evidence="4">
    <location>
        <begin position="118"/>
        <end position="373"/>
    </location>
</feature>
<feature type="region of interest" description="Actin-binding 2" evidence="4">
    <location>
        <begin position="392"/>
        <end position="621"/>
    </location>
</feature>
<feature type="binding site" evidence="6">
    <location>
        <position position="22"/>
    </location>
    <ligand>
        <name>Ca(2+)</name>
        <dbReference type="ChEBI" id="CHEBI:29108"/>
        <label>1</label>
    </ligand>
</feature>
<feature type="binding site" evidence="6">
    <location>
        <position position="24"/>
    </location>
    <ligand>
        <name>Ca(2+)</name>
        <dbReference type="ChEBI" id="CHEBI:29108"/>
        <label>1</label>
    </ligand>
</feature>
<feature type="binding site" evidence="6">
    <location>
        <position position="26"/>
    </location>
    <ligand>
        <name>Ca(2+)</name>
        <dbReference type="ChEBI" id="CHEBI:29108"/>
        <label>1</label>
    </ligand>
</feature>
<feature type="binding site" evidence="6">
    <location>
        <position position="28"/>
    </location>
    <ligand>
        <name>Ca(2+)</name>
        <dbReference type="ChEBI" id="CHEBI:29108"/>
        <label>1</label>
    </ligand>
</feature>
<feature type="binding site" evidence="6">
    <location>
        <position position="33"/>
    </location>
    <ligand>
        <name>Ca(2+)</name>
        <dbReference type="ChEBI" id="CHEBI:29108"/>
        <label>1</label>
    </ligand>
</feature>
<feature type="binding site" evidence="6">
    <location>
        <position position="62"/>
    </location>
    <ligand>
        <name>Ca(2+)</name>
        <dbReference type="ChEBI" id="CHEBI:29108"/>
        <label>2</label>
    </ligand>
</feature>
<feature type="binding site" evidence="6">
    <location>
        <position position="64"/>
    </location>
    <ligand>
        <name>Ca(2+)</name>
        <dbReference type="ChEBI" id="CHEBI:29108"/>
        <label>2</label>
    </ligand>
</feature>
<feature type="binding site" evidence="6">
    <location>
        <position position="66"/>
    </location>
    <ligand>
        <name>Ca(2+)</name>
        <dbReference type="ChEBI" id="CHEBI:29108"/>
        <label>2</label>
    </ligand>
</feature>
<feature type="binding site" evidence="6">
    <location>
        <position position="68"/>
    </location>
    <ligand>
        <name>Ca(2+)</name>
        <dbReference type="ChEBI" id="CHEBI:29108"/>
        <label>2</label>
    </ligand>
</feature>
<feature type="binding site" evidence="6">
    <location>
        <position position="73"/>
    </location>
    <ligand>
        <name>Ca(2+)</name>
        <dbReference type="ChEBI" id="CHEBI:29108"/>
        <label>2</label>
    </ligand>
</feature>
<feature type="sequence conflict" description="In Ref. 2; AAD40680." evidence="9" ref="2">
    <original>VI</original>
    <variation>HE</variation>
    <location>
        <begin position="423"/>
        <end position="424"/>
    </location>
</feature>
<feature type="sequence conflict" description="In Ref. 2; AAD40680." evidence="9" ref="2">
    <original>D</original>
    <variation>G</variation>
    <location>
        <position position="438"/>
    </location>
</feature>
<feature type="sequence conflict" description="In Ref. 2; AAD40680." evidence="9" ref="2">
    <original>K</original>
    <variation>E</variation>
    <location>
        <position position="575"/>
    </location>
</feature>
<gene>
    <name evidence="11" type="primary">lcp1</name>
    <name type="synonym">pls2</name>
</gene>
<evidence type="ECO:0000250" key="1"/>
<evidence type="ECO:0000250" key="2">
    <source>
        <dbReference type="UniProtKB" id="P13796"/>
    </source>
</evidence>
<evidence type="ECO:0000250" key="3">
    <source>
        <dbReference type="UniProtKB" id="Q61233"/>
    </source>
</evidence>
<evidence type="ECO:0000255" key="4"/>
<evidence type="ECO:0000255" key="5">
    <source>
        <dbReference type="PROSITE-ProRule" id="PRU00044"/>
    </source>
</evidence>
<evidence type="ECO:0000255" key="6">
    <source>
        <dbReference type="PROSITE-ProRule" id="PRU00448"/>
    </source>
</evidence>
<evidence type="ECO:0000269" key="7">
    <source>
    </source>
</evidence>
<evidence type="ECO:0000269" key="8">
    <source>
    </source>
</evidence>
<evidence type="ECO:0000305" key="9"/>
<evidence type="ECO:0000312" key="10">
    <source>
        <dbReference type="EMBL" id="AAD40680.1"/>
    </source>
</evidence>
<evidence type="ECO:0000312" key="11">
    <source>
        <dbReference type="EMBL" id="AAH62381.1"/>
    </source>
</evidence>
<sequence>MAAAQISAEEMEELREAFTKVDVDGNGHISTDELNALFKAANLPLPGYRVREIIQEISRTMDLNQDGKITFDEFAKVVHDLKSSEVAKTFRKAINKKEGICSVAGTSEQSGTQHSYSEEEKVAFVNWVNKALEKDPDCQHVLPMDPSTDDLFTAVGDGIVLCKMINLSVPDTIDERTINKKKLTPFTIQENLNLALNSASAIGCHVVNIGAEDLKEGRQHLVLGLLWQVIKIGLFADIEISRNEALIALLRDGESLEDLVKLSPEELLLRWANYHLEEAGCPKINNFSSDIKDSKAYYNILNQVAPKRDEEGIPAIPIDISGIREKDDLKRAECMLEQADRLGCRQFVTATDVVRGNPKLNLAYVANLFNKYPALKKPENQDIDWSSIEGETREERTFRNWMNSLGVNPRVNHLYVDLADALVIFQLYEKIKVPVDWDKVNKPPYPKLGSNMKKLENCNYAVELGKKEAKFSLVGIAGQDLNEGNRTLTLALLWQLMRRYTLNILEDLGDGQKIIDETIVQWVNETLTQAGKGTISGFKDGSISSSMPVLDLIDAIQPGSIRYDLLKAEDLTDEKKLNNAKYAISMARKIGARVYALPEDLVEVKPKMVMTVFACLMARGMRRI</sequence>
<reference evidence="9 11" key="1">
    <citation type="submission" date="2003-11" db="EMBL/GenBank/DDBJ databases">
        <authorList>
            <consortium name="NIH - Zebrafish Gene Collection (ZGC) project"/>
        </authorList>
    </citation>
    <scope>NUCLEOTIDE SEQUENCE [LARGE SCALE MRNA]</scope>
    <source>
        <tissue evidence="11">Kidney</tissue>
    </source>
</reference>
<reference evidence="9 10" key="2">
    <citation type="journal article" date="1999" name="Development">
        <title>Ontogeny and behaviour of early macrophages in the zebrafish embryo.</title>
        <authorList>
            <person name="Herbomel P."/>
            <person name="Thisse B."/>
            <person name="Thisse C."/>
        </authorList>
    </citation>
    <scope>NUCLEOTIDE SEQUENCE [MRNA] OF 423-624</scope>
    <scope>DEVELOPMENTAL STAGE</scope>
</reference>
<reference key="3">
    <citation type="journal article" date="2016" name="Immunity">
        <title>Macrophage Epithelial Reprogramming Underlies Mycobacterial Granuloma Formation and Promotes Infection.</title>
        <authorList>
            <person name="Cronan M.R."/>
            <person name="Beerman R.W."/>
            <person name="Rosenberg A.F."/>
            <person name="Saelens J.W."/>
            <person name="Johnson M.G."/>
            <person name="Oehlers S.H."/>
            <person name="Sisk D.M."/>
            <person name="Jurcic Smith K.L."/>
            <person name="Medvitz N.A."/>
            <person name="Miller S.E."/>
            <person name="Trinh L.A."/>
            <person name="Fraser S.E."/>
            <person name="Madden J.F."/>
            <person name="Turner J."/>
            <person name="Stout J.E."/>
            <person name="Lee S."/>
            <person name="Tobin D.M."/>
        </authorList>
    </citation>
    <scope>TISSUE SPECIFICITY</scope>
</reference>
<name>PLSL_DANRE</name>
<organism>
    <name type="scientific">Danio rerio</name>
    <name type="common">Zebrafish</name>
    <name type="synonym">Brachydanio rerio</name>
    <dbReference type="NCBI Taxonomy" id="7955"/>
    <lineage>
        <taxon>Eukaryota</taxon>
        <taxon>Metazoa</taxon>
        <taxon>Chordata</taxon>
        <taxon>Craniata</taxon>
        <taxon>Vertebrata</taxon>
        <taxon>Euteleostomi</taxon>
        <taxon>Actinopterygii</taxon>
        <taxon>Neopterygii</taxon>
        <taxon>Teleostei</taxon>
        <taxon>Ostariophysi</taxon>
        <taxon>Cypriniformes</taxon>
        <taxon>Danionidae</taxon>
        <taxon>Danioninae</taxon>
        <taxon>Danio</taxon>
    </lineage>
</organism>